<evidence type="ECO:0000250" key="1"/>
<evidence type="ECO:0000250" key="2">
    <source>
        <dbReference type="UniProtKB" id="P07224"/>
    </source>
</evidence>
<evidence type="ECO:0000255" key="3"/>
<evidence type="ECO:0000255" key="4">
    <source>
        <dbReference type="PROSITE-ProRule" id="PRU00076"/>
    </source>
</evidence>
<evidence type="ECO:0000255" key="5">
    <source>
        <dbReference type="PROSITE-ProRule" id="PRU00122"/>
    </source>
</evidence>
<evidence type="ECO:0000255" key="6">
    <source>
        <dbReference type="PROSITE-ProRule" id="PRU00463"/>
    </source>
</evidence>
<name>PROS_RABIT</name>
<reference key="1">
    <citation type="journal article" date="1993" name="Eur. J. Biochem.">
        <title>Molecular cloning, expression and functional characterization of rabbit anticoagulant vitamin-K-dependent protein S.</title>
        <authorList>
            <person name="He X."/>
            <person name="Dahlbaeck B."/>
        </authorList>
    </citation>
    <scope>NUCLEOTIDE SEQUENCE [MRNA]</scope>
</reference>
<proteinExistence type="evidence at transcript level"/>
<dbReference type="EMBL" id="Z26485">
    <property type="protein sequence ID" value="CAA81259.1"/>
    <property type="molecule type" value="mRNA"/>
</dbReference>
<dbReference type="PIR" id="S38819">
    <property type="entry name" value="S38819"/>
</dbReference>
<dbReference type="SMR" id="P98118"/>
<dbReference type="FunCoup" id="P98118">
    <property type="interactions" value="21"/>
</dbReference>
<dbReference type="STRING" id="9986.ENSOCUP00000018723"/>
<dbReference type="GlyCosmos" id="P98118">
    <property type="glycosylation" value="2 sites, No reported glycans"/>
</dbReference>
<dbReference type="PaxDb" id="9986-ENSOCUP00000018723"/>
<dbReference type="eggNOG" id="ENOG502QSNF">
    <property type="taxonomic scope" value="Eukaryota"/>
</dbReference>
<dbReference type="InParanoid" id="P98118"/>
<dbReference type="Proteomes" id="UP000001811">
    <property type="component" value="Unplaced"/>
</dbReference>
<dbReference type="GO" id="GO:0005615">
    <property type="term" value="C:extracellular space"/>
    <property type="evidence" value="ECO:0007669"/>
    <property type="project" value="TreeGrafter"/>
</dbReference>
<dbReference type="GO" id="GO:0005509">
    <property type="term" value="F:calcium ion binding"/>
    <property type="evidence" value="ECO:0007669"/>
    <property type="project" value="InterPro"/>
</dbReference>
<dbReference type="GO" id="GO:0007596">
    <property type="term" value="P:blood coagulation"/>
    <property type="evidence" value="ECO:0007669"/>
    <property type="project" value="UniProtKB-KW"/>
</dbReference>
<dbReference type="GO" id="GO:0042730">
    <property type="term" value="P:fibrinolysis"/>
    <property type="evidence" value="ECO:0007669"/>
    <property type="project" value="UniProtKB-KW"/>
</dbReference>
<dbReference type="CDD" id="cd00054">
    <property type="entry name" value="EGF_CA"/>
    <property type="match status" value="3"/>
</dbReference>
<dbReference type="CDD" id="cd00110">
    <property type="entry name" value="LamG"/>
    <property type="match status" value="1"/>
</dbReference>
<dbReference type="FunFam" id="2.10.25.10:FF:000240">
    <property type="entry name" value="Vitamin K-dependent protein S"/>
    <property type="match status" value="1"/>
</dbReference>
<dbReference type="FunFam" id="2.10.25.10:FF:000426">
    <property type="entry name" value="Vitamin K-dependent protein S"/>
    <property type="match status" value="1"/>
</dbReference>
<dbReference type="FunFam" id="2.10.25.10:FF:000631">
    <property type="entry name" value="Vitamin K-dependent protein S"/>
    <property type="match status" value="1"/>
</dbReference>
<dbReference type="FunFam" id="2.60.120.200:FF:000129">
    <property type="entry name" value="Vitamin K-dependent protein S"/>
    <property type="match status" value="1"/>
</dbReference>
<dbReference type="FunFam" id="2.60.120.200:FF:000077">
    <property type="entry name" value="vitamin K-dependent protein S"/>
    <property type="match status" value="1"/>
</dbReference>
<dbReference type="FunFam" id="4.10.740.10:FF:000001">
    <property type="entry name" value="vitamin K-dependent protein S"/>
    <property type="match status" value="1"/>
</dbReference>
<dbReference type="Gene3D" id="2.60.120.200">
    <property type="match status" value="2"/>
</dbReference>
<dbReference type="Gene3D" id="4.10.740.10">
    <property type="entry name" value="Coagulation Factor IX"/>
    <property type="match status" value="1"/>
</dbReference>
<dbReference type="Gene3D" id="2.10.25.10">
    <property type="entry name" value="Laminin"/>
    <property type="match status" value="4"/>
</dbReference>
<dbReference type="InterPro" id="IPR017857">
    <property type="entry name" value="Coagulation_fac-like_Gla_dom"/>
</dbReference>
<dbReference type="InterPro" id="IPR013320">
    <property type="entry name" value="ConA-like_dom_sf"/>
</dbReference>
<dbReference type="InterPro" id="IPR001881">
    <property type="entry name" value="EGF-like_Ca-bd_dom"/>
</dbReference>
<dbReference type="InterPro" id="IPR000742">
    <property type="entry name" value="EGF-like_dom"/>
</dbReference>
<dbReference type="InterPro" id="IPR000152">
    <property type="entry name" value="EGF-type_Asp/Asn_hydroxyl_site"/>
</dbReference>
<dbReference type="InterPro" id="IPR018097">
    <property type="entry name" value="EGF_Ca-bd_CS"/>
</dbReference>
<dbReference type="InterPro" id="IPR051145">
    <property type="entry name" value="GAS-SHBG-PROS"/>
</dbReference>
<dbReference type="InterPro" id="IPR035972">
    <property type="entry name" value="GLA-like_dom_SF"/>
</dbReference>
<dbReference type="InterPro" id="IPR000294">
    <property type="entry name" value="GLA_domain"/>
</dbReference>
<dbReference type="InterPro" id="IPR009030">
    <property type="entry name" value="Growth_fac_rcpt_cys_sf"/>
</dbReference>
<dbReference type="InterPro" id="IPR001791">
    <property type="entry name" value="Laminin_G"/>
</dbReference>
<dbReference type="InterPro" id="IPR049883">
    <property type="entry name" value="NOTCH1_EGF-like"/>
</dbReference>
<dbReference type="PANTHER" id="PTHR24040">
    <property type="entry name" value="LAMININ G-LIKE DOMAIN-CONTAINING PROTEIN"/>
    <property type="match status" value="1"/>
</dbReference>
<dbReference type="PANTHER" id="PTHR24040:SF0">
    <property type="entry name" value="VITAMIN K-DEPENDENT PROTEIN S"/>
    <property type="match status" value="1"/>
</dbReference>
<dbReference type="Pfam" id="PF00008">
    <property type="entry name" value="EGF"/>
    <property type="match status" value="1"/>
</dbReference>
<dbReference type="Pfam" id="PF07645">
    <property type="entry name" value="EGF_CA"/>
    <property type="match status" value="2"/>
</dbReference>
<dbReference type="Pfam" id="PF14670">
    <property type="entry name" value="FXa_inhibition"/>
    <property type="match status" value="1"/>
</dbReference>
<dbReference type="Pfam" id="PF00594">
    <property type="entry name" value="Gla"/>
    <property type="match status" value="1"/>
</dbReference>
<dbReference type="Pfam" id="PF00054">
    <property type="entry name" value="Laminin_G_1"/>
    <property type="match status" value="1"/>
</dbReference>
<dbReference type="Pfam" id="PF02210">
    <property type="entry name" value="Laminin_G_2"/>
    <property type="match status" value="1"/>
</dbReference>
<dbReference type="PRINTS" id="PR00001">
    <property type="entry name" value="GLABLOOD"/>
</dbReference>
<dbReference type="SMART" id="SM00181">
    <property type="entry name" value="EGF"/>
    <property type="match status" value="4"/>
</dbReference>
<dbReference type="SMART" id="SM00179">
    <property type="entry name" value="EGF_CA"/>
    <property type="match status" value="4"/>
</dbReference>
<dbReference type="SMART" id="SM00069">
    <property type="entry name" value="GLA"/>
    <property type="match status" value="1"/>
</dbReference>
<dbReference type="SMART" id="SM00282">
    <property type="entry name" value="LamG"/>
    <property type="match status" value="2"/>
</dbReference>
<dbReference type="SUPFAM" id="SSF49899">
    <property type="entry name" value="Concanavalin A-like lectins/glucanases"/>
    <property type="match status" value="2"/>
</dbReference>
<dbReference type="SUPFAM" id="SSF57630">
    <property type="entry name" value="GLA-domain"/>
    <property type="match status" value="1"/>
</dbReference>
<dbReference type="SUPFAM" id="SSF57184">
    <property type="entry name" value="Growth factor receptor domain"/>
    <property type="match status" value="1"/>
</dbReference>
<dbReference type="PROSITE" id="PS00010">
    <property type="entry name" value="ASX_HYDROXYL"/>
    <property type="match status" value="4"/>
</dbReference>
<dbReference type="PROSITE" id="PS00022">
    <property type="entry name" value="EGF_1"/>
    <property type="match status" value="1"/>
</dbReference>
<dbReference type="PROSITE" id="PS01186">
    <property type="entry name" value="EGF_2"/>
    <property type="match status" value="3"/>
</dbReference>
<dbReference type="PROSITE" id="PS50026">
    <property type="entry name" value="EGF_3"/>
    <property type="match status" value="3"/>
</dbReference>
<dbReference type="PROSITE" id="PS01187">
    <property type="entry name" value="EGF_CA"/>
    <property type="match status" value="3"/>
</dbReference>
<dbReference type="PROSITE" id="PS00011">
    <property type="entry name" value="GLA_1"/>
    <property type="match status" value="1"/>
</dbReference>
<dbReference type="PROSITE" id="PS50998">
    <property type="entry name" value="GLA_2"/>
    <property type="match status" value="1"/>
</dbReference>
<dbReference type="PROSITE" id="PS50025">
    <property type="entry name" value="LAM_G_DOMAIN"/>
    <property type="match status" value="2"/>
</dbReference>
<protein>
    <recommendedName>
        <fullName>Vitamin K-dependent protein S</fullName>
    </recommendedName>
</protein>
<keyword id="KW-0094">Blood coagulation</keyword>
<keyword id="KW-0106">Calcium</keyword>
<keyword id="KW-0165">Cleavage on pair of basic residues</keyword>
<keyword id="KW-1015">Disulfide bond</keyword>
<keyword id="KW-0245">EGF-like domain</keyword>
<keyword id="KW-0280">Fibrinolysis</keyword>
<keyword id="KW-0301">Gamma-carboxyglutamic acid</keyword>
<keyword id="KW-0325">Glycoprotein</keyword>
<keyword id="KW-0356">Hemostasis</keyword>
<keyword id="KW-0379">Hydroxylation</keyword>
<keyword id="KW-1185">Reference proteome</keyword>
<keyword id="KW-0677">Repeat</keyword>
<keyword id="KW-0964">Secreted</keyword>
<keyword id="KW-0865">Zymogen</keyword>
<accession>P98118</accession>
<organism>
    <name type="scientific">Oryctolagus cuniculus</name>
    <name type="common">Rabbit</name>
    <dbReference type="NCBI Taxonomy" id="9986"/>
    <lineage>
        <taxon>Eukaryota</taxon>
        <taxon>Metazoa</taxon>
        <taxon>Chordata</taxon>
        <taxon>Craniata</taxon>
        <taxon>Vertebrata</taxon>
        <taxon>Euteleostomi</taxon>
        <taxon>Mammalia</taxon>
        <taxon>Eutheria</taxon>
        <taxon>Euarchontoglires</taxon>
        <taxon>Glires</taxon>
        <taxon>Lagomorpha</taxon>
        <taxon>Leporidae</taxon>
        <taxon>Oryctolagus</taxon>
    </lineage>
</organism>
<comment type="function">
    <text>Anticoagulant plasma protein; it is a cofactor to activated protein C in the degradation of coagulation factors Va and VIIIa. It helps to prevent coagulation and stimulating fibrinolysis.</text>
</comment>
<comment type="subunit">
    <text>Interacts with C4b-binding protein, a regulator of the complex system. In rabbit plasma however, protein S appears to be present only in free form.</text>
</comment>
<comment type="subcellular location">
    <subcellularLocation>
        <location>Secreted</location>
    </subcellularLocation>
</comment>
<comment type="tissue specificity">
    <text>Plasma.</text>
</comment>
<comment type="PTM">
    <text evidence="1">The iron and 2-oxoglutarate dependent 3-hydroxylation of aspartate and asparagine is (R) stereospecific within EGF domains.</text>
</comment>
<sequence>GHASQVLVRKRRANSMLEETKKGNLERECIEELCNKEEAREVFENDPETDYFYPKYLGCLGSFRAKLFTATRRSANGYPDLRSCVNAIPDQCNPLPCSEEGYLNCKDGQATFTCICKPGWQGEKCEIDINECKDPTNINGGCSQICDNTAGSYHCSCKSGFVMLANEKDCKDMDECSVKPSVCGTAVCKNTPGDFECECSEGYRYNPTAKSCEDIDECSENMCAQLCVNYPGGYSCYCDGKKGFKLAQDKKSCEAVPVCLPLDLDKNYQLLYLAEQFVGAVLYLKFHLPEITRFSAEFDFRTYDSEGVILYAESLDHSTWFLIALRQGKIEIQFKNDYAAQITTGGQVINDGLWNMVSVEELEHSVSIKIAQEPVMNINKPGSLFKPTNGFLETKVYFAGLPRKVENALIRPINPRLDGCMRGWNLMKQGASGVKEIIQQKQKKHCLVTVEKGSYYPGSGIAQFHIDYNNLSYVEDWQVNVTLNIRPSTGTGVMLTLVSGNTLPFALSLVQSTSETSQDILVSVENRVIYQLESISLCSGQQSQLEFSVSRNHLELSTPLVKDVIYSEDLQRHLAVLDEAMKGTVTTYLGGLPEVPFNATPVNAFYNGCMEVNINGVQLDLDEAISKHNDIRAHSCPSVWNDKTNS</sequence>
<feature type="propeptide" id="PRO_0000022125" evidence="3">
    <location>
        <begin position="1" status="less than"/>
        <end position="12"/>
    </location>
</feature>
<feature type="chain" id="PRO_0000022126" description="Vitamin K-dependent protein S">
    <location>
        <begin position="13"/>
        <end position="646"/>
    </location>
</feature>
<feature type="domain" description="Gla" evidence="6">
    <location>
        <begin position="13"/>
        <end position="58"/>
    </location>
</feature>
<feature type="domain" description="EGF-like 1" evidence="4">
    <location>
        <begin position="88"/>
        <end position="126"/>
    </location>
</feature>
<feature type="domain" description="EGF-like 2; calcium-binding" evidence="4">
    <location>
        <begin position="128"/>
        <end position="171"/>
    </location>
</feature>
<feature type="domain" description="EGF-like 3; calcium-binding" evidence="4">
    <location>
        <begin position="172"/>
        <end position="213"/>
    </location>
</feature>
<feature type="domain" description="EGF-like 4; calcium-binding" evidence="4">
    <location>
        <begin position="214"/>
        <end position="254"/>
    </location>
</feature>
<feature type="domain" description="Laminin G-like 1" evidence="5">
    <location>
        <begin position="270"/>
        <end position="446"/>
    </location>
</feature>
<feature type="domain" description="Laminin G-like 2" evidence="5">
    <location>
        <begin position="455"/>
        <end position="636"/>
    </location>
</feature>
<feature type="region of interest" description="Thrombin-sensitive">
    <location>
        <begin position="59"/>
        <end position="87"/>
    </location>
</feature>
<feature type="modified residue" description="4-carboxyglutamate" evidence="2 6">
    <location>
        <position position="18"/>
    </location>
</feature>
<feature type="modified residue" description="4-carboxyglutamate" evidence="2 6">
    <location>
        <position position="19"/>
    </location>
</feature>
<feature type="modified residue" description="4-carboxyglutamate" evidence="2 6">
    <location>
        <position position="26"/>
    </location>
</feature>
<feature type="modified residue" description="4-carboxyglutamate" evidence="2 6">
    <location>
        <position position="28"/>
    </location>
</feature>
<feature type="modified residue" description="4-carboxyglutamate" evidence="2 6">
    <location>
        <position position="31"/>
    </location>
</feature>
<feature type="modified residue" description="4-carboxyglutamate" evidence="2 6">
    <location>
        <position position="32"/>
    </location>
</feature>
<feature type="modified residue" description="4-carboxyglutamate" evidence="2 6">
    <location>
        <position position="37"/>
    </location>
</feature>
<feature type="modified residue" description="4-carboxyglutamate" evidence="2 6">
    <location>
        <position position="38"/>
    </location>
</feature>
<feature type="modified residue" description="4-carboxyglutamate" evidence="2 6">
    <location>
        <position position="41"/>
    </location>
</feature>
<feature type="modified residue" description="4-carboxyglutamate" evidence="2 6">
    <location>
        <position position="44"/>
    </location>
</feature>
<feature type="modified residue" description="4-carboxyglutamate" evidence="2 6">
    <location>
        <position position="48"/>
    </location>
</feature>
<feature type="modified residue" description="(3R)-3-hydroxyaspartate" evidence="1">
    <location>
        <position position="107"/>
    </location>
</feature>
<feature type="glycosylation site" description="N-linked (GlcNAc...) asparagine" evidence="3">
    <location>
        <position position="470"/>
    </location>
</feature>
<feature type="glycosylation site" description="N-linked (GlcNAc...) asparagine" evidence="3">
    <location>
        <position position="480"/>
    </location>
</feature>
<feature type="disulfide bond" evidence="1">
    <location>
        <begin position="29"/>
        <end position="34"/>
    </location>
</feature>
<feature type="disulfide bond" evidence="1">
    <location>
        <begin position="92"/>
        <end position="105"/>
    </location>
</feature>
<feature type="disulfide bond" evidence="1">
    <location>
        <begin position="97"/>
        <end position="114"/>
    </location>
</feature>
<feature type="disulfide bond" evidence="1">
    <location>
        <begin position="116"/>
        <end position="125"/>
    </location>
</feature>
<feature type="disulfide bond" evidence="1">
    <location>
        <begin position="132"/>
        <end position="146"/>
    </location>
</feature>
<feature type="disulfide bond" evidence="1">
    <location>
        <begin position="142"/>
        <end position="155"/>
    </location>
</feature>
<feature type="disulfide bond" evidence="1">
    <location>
        <begin position="157"/>
        <end position="170"/>
    </location>
</feature>
<feature type="disulfide bond" evidence="1">
    <location>
        <begin position="176"/>
        <end position="188"/>
    </location>
</feature>
<feature type="disulfide bond" evidence="1">
    <location>
        <begin position="183"/>
        <end position="197"/>
    </location>
</feature>
<feature type="disulfide bond" evidence="1">
    <location>
        <begin position="199"/>
        <end position="212"/>
    </location>
</feature>
<feature type="disulfide bond" evidence="1">
    <location>
        <begin position="218"/>
        <end position="227"/>
    </location>
</feature>
<feature type="disulfide bond" evidence="1">
    <location>
        <begin position="223"/>
        <end position="236"/>
    </location>
</feature>
<feature type="disulfide bond" evidence="1">
    <location>
        <begin position="238"/>
        <end position="253"/>
    </location>
</feature>
<feature type="disulfide bond" evidence="1">
    <location>
        <begin position="420"/>
        <end position="446"/>
    </location>
</feature>
<feature type="disulfide bond" evidence="1">
    <location>
        <begin position="609"/>
        <end position="636"/>
    </location>
</feature>
<feature type="non-terminal residue">
    <location>
        <position position="1"/>
    </location>
</feature>
<gene>
    <name type="primary">PROS1</name>
    <name type="synonym">PROS</name>
</gene>